<name>FDHA1_METMP</name>
<reference key="1">
    <citation type="journal article" date="2004" name="J. Bacteriol.">
        <title>Complete genome sequence of the genetically tractable hydrogenotrophic methanogen Methanococcus maripaludis.</title>
        <authorList>
            <person name="Hendrickson E.L."/>
            <person name="Kaul R."/>
            <person name="Zhou Y."/>
            <person name="Bovee D."/>
            <person name="Chapman P."/>
            <person name="Chung J."/>
            <person name="Conway de Macario E."/>
            <person name="Dodsworth J.A."/>
            <person name="Gillett W."/>
            <person name="Graham D.E."/>
            <person name="Hackett M."/>
            <person name="Haydock A.K."/>
            <person name="Kang A."/>
            <person name="Land M.L."/>
            <person name="Levy R."/>
            <person name="Lie T.J."/>
            <person name="Major T.A."/>
            <person name="Moore B.C."/>
            <person name="Porat I."/>
            <person name="Palmeiri A."/>
            <person name="Rouse G."/>
            <person name="Saenphimmachak C."/>
            <person name="Soell D."/>
            <person name="Van Dien S."/>
            <person name="Wang T."/>
            <person name="Whitman W.B."/>
            <person name="Xia Q."/>
            <person name="Zhang Y."/>
            <person name="Larimer F.W."/>
            <person name="Olson M.V."/>
            <person name="Leigh J.A."/>
        </authorList>
    </citation>
    <scope>NUCLEOTIDE SEQUENCE [LARGE SCALE GENOMIC DNA]</scope>
    <source>
        <strain>DSM 14266 / JCM 13030 / NBRC 101832 / S2 / LL</strain>
    </source>
</reference>
<reference key="2">
    <citation type="journal article" date="2008" name="Appl. Environ. Microbiol.">
        <title>Formate-dependent H2 production by the mesophilic methanogen Methanococcus maripaludis.</title>
        <authorList>
            <person name="Lupa B."/>
            <person name="Hendrickson E.L."/>
            <person name="Leigh J.A."/>
            <person name="Whitman W.B."/>
        </authorList>
    </citation>
    <scope>FUNCTION AS A FORMATE DEHYDROGENASE</scope>
    <scope>DISRUPTION PHENOTYPE</scope>
    <source>
        <strain>DSM 14266 / JCM 13030 / NBRC 101832 / S2 / LL</strain>
    </source>
</reference>
<reference key="3">
    <citation type="journal article" date="2013" name="J. Bacteriol.">
        <title>Effects of H2 and formate on growth yield and regulation of methanogenesis in Methanococcus maripaludis.</title>
        <authorList>
            <person name="Costa K.C."/>
            <person name="Yoon S.H."/>
            <person name="Pan M."/>
            <person name="Burn J.A."/>
            <person name="Baliga N.S."/>
            <person name="Leigh J.A."/>
        </authorList>
    </citation>
    <scope>DISRUPTION PHENOTYPE</scope>
</reference>
<comment type="function">
    <text evidence="4">Catalyzes the oxidation of formate to carbon dioxide, with coenzyme F420 as the electron acceptor (PubMed:18791018). In vitro can also use methyl viologen as electron acceptor (PubMed:18791018).</text>
</comment>
<comment type="catalytic activity">
    <reaction evidence="8">
        <text>oxidized coenzyme F420-(gamma-L-Glu)(n) + formate + 2 H(+) = reduced coenzyme F420-(gamma-L-Glu)(n) + CO2</text>
        <dbReference type="Rhea" id="RHEA:42764"/>
        <dbReference type="Rhea" id="RHEA-COMP:12939"/>
        <dbReference type="Rhea" id="RHEA-COMP:14378"/>
        <dbReference type="ChEBI" id="CHEBI:15378"/>
        <dbReference type="ChEBI" id="CHEBI:15740"/>
        <dbReference type="ChEBI" id="CHEBI:16526"/>
        <dbReference type="ChEBI" id="CHEBI:133980"/>
        <dbReference type="ChEBI" id="CHEBI:139511"/>
        <dbReference type="EC" id="1.17.98.3"/>
    </reaction>
</comment>
<comment type="cofactor">
    <cofactor evidence="2">
        <name>[4Fe-4S] cluster</name>
        <dbReference type="ChEBI" id="CHEBI:49883"/>
    </cofactor>
    <text evidence="2">Binds 1 [4Fe-4S] cluster.</text>
</comment>
<comment type="cofactor">
    <cofactor evidence="1">
        <name>Mo-bis(molybdopterin guanine dinucleotide)</name>
        <dbReference type="ChEBI" id="CHEBI:60539"/>
    </cofactor>
    <text evidence="1">Binds 1 molybdenum-bis(molybdopterin guanine dinucleotide) (Mo-bis-MGD) cofactor per subunit.</text>
</comment>
<comment type="cofactor">
    <cofactor evidence="1">
        <name>Zn(2+)</name>
        <dbReference type="ChEBI" id="CHEBI:29105"/>
    </cofactor>
</comment>
<comment type="subunit">
    <text evidence="1">Dimer of an alpha (FdhA1) and a beta (FdhB1) subunit.</text>
</comment>
<comment type="disruption phenotype">
    <text evidence="4 5">The deletion mutant cannot grow with formate and produces H(2) poorly (PubMed:18791018, PubMed:23335420). The fdhA1-fdhA2 double mutant is unable to utilize formate for either growth or H(2) production (PubMed:18791018).</text>
</comment>
<comment type="miscellaneous">
    <text evidence="4">The genome of M.maripaludis harbors two sets of genes encoding the F420-dependent formate dehydrogenase (Fdh), fdhA1-fdhB1 (Fdh1 isozyme) and fdhA2-fdhB2 (Fdh2 isozyme) (PubMed:18791018). The Fdh1 isozyme is the primary Fdh and the Fdh2 isozyme may not play a major role (PubMed:18791018).</text>
</comment>
<comment type="similarity">
    <text evidence="7">Belongs to the prokaryotic molybdopterin-containing oxidoreductase family.</text>
</comment>
<feature type="chain" id="PRO_0000461127" description="F420-dependent formate dehydrogenase 1 subunit alpha">
    <location>
        <begin position="1"/>
        <end position="674"/>
    </location>
</feature>
<feature type="domain" description="4Fe-4S Mo/W bis-MGD-type" evidence="3">
    <location>
        <begin position="3"/>
        <end position="59"/>
    </location>
</feature>
<feature type="binding site" evidence="3">
    <location>
        <position position="10"/>
    </location>
    <ligand>
        <name>[4Fe-4S] cluster</name>
        <dbReference type="ChEBI" id="CHEBI:49883"/>
    </ligand>
</feature>
<feature type="binding site" evidence="3">
    <location>
        <position position="13"/>
    </location>
    <ligand>
        <name>[4Fe-4S] cluster</name>
        <dbReference type="ChEBI" id="CHEBI:49883"/>
    </ligand>
</feature>
<feature type="binding site" evidence="3">
    <location>
        <position position="17"/>
    </location>
    <ligand>
        <name>[4Fe-4S] cluster</name>
        <dbReference type="ChEBI" id="CHEBI:49883"/>
    </ligand>
</feature>
<feature type="binding site" evidence="3">
    <location>
        <position position="45"/>
    </location>
    <ligand>
        <name>[4Fe-4S] cluster</name>
        <dbReference type="ChEBI" id="CHEBI:49883"/>
    </ligand>
</feature>
<feature type="non-standard amino acid" description="Selenocysteine" evidence="9">
    <location>
        <position position="132"/>
    </location>
</feature>
<accession>Q6LXQ1</accession>
<evidence type="ECO:0000250" key="1">
    <source>
        <dbReference type="UniProtKB" id="P06131"/>
    </source>
</evidence>
<evidence type="ECO:0000250" key="2">
    <source>
        <dbReference type="UniProtKB" id="P07658"/>
    </source>
</evidence>
<evidence type="ECO:0000255" key="3">
    <source>
        <dbReference type="PROSITE-ProRule" id="PRU01004"/>
    </source>
</evidence>
<evidence type="ECO:0000269" key="4">
    <source>
    </source>
</evidence>
<evidence type="ECO:0000269" key="5">
    <source>
    </source>
</evidence>
<evidence type="ECO:0000303" key="6">
    <source>
    </source>
</evidence>
<evidence type="ECO:0000305" key="7"/>
<evidence type="ECO:0000305" key="8">
    <source>
    </source>
</evidence>
<evidence type="ECO:0000312" key="9">
    <source>
        <dbReference type="EMBL" id="CAF30854.1"/>
    </source>
</evidence>
<proteinExistence type="evidence at protein level"/>
<sequence>MELDFIHTICPYCGTGCGVDLVVKDGTLVGTNPFKRHPVNEGKTCIKGSYCHEFVHRDDRLKTPLIRKNGELVEASWDEALELISGKLQNYSPEEVGFFSSARCTNEDNYVFQKFARTVIKTNNVDHCARLUHSATVVGLGQAFGSGAMTNSISDIEDADCIFIIGSNTFEQHPLIARRVVRAKEKGTKIIVIDPRYTPTAKQADLYLQLLPGTNIAVLNAIMHVLVKENLVDEEFIKNRTKGYEELKTTLETYTPEYASKLSGVAPELIVEAAKMYGSANAASILYCMGITQFTTGVNNVKSCCNLAMITGNIGKPGTGVNPLRGQNNVQGACDMGALPNVFPGYQAVPANHEKYAEAWNTCVDPNVGLSIPDMLAKAGEQVKCIYVMGENPMVSDPDIHHVEHALKSLDLLIVQDIFLTETAQVADVVLPGASWAEKDGTFSNTERRIQKINKAVDSPGEAIADWKIVKMLAEKMGQGELFNFNTAEEVFQEIAKVTPQYAGVTYERLGVDGLHWPCKTCEDPGTPILHCEKCLTPDGLGNIFAIDYADPDEMADSEYPMTLTTGRIIFHYHTGTMTRRSKHMADEINEGFVEIHPEDAEKMGIKNKQKVKVSTRRGEVVVNAKITPNIKQGVVFMPFHFAETAANILTNPAQDPNCKIPEYKVCAAKVEKI</sequence>
<gene>
    <name evidence="6" type="primary">fdhA1</name>
    <name evidence="9" type="ordered locus">MMP1298</name>
</gene>
<keyword id="KW-0004">4Fe-4S</keyword>
<keyword id="KW-0408">Iron</keyword>
<keyword id="KW-0411">Iron-sulfur</keyword>
<keyword id="KW-0479">Metal-binding</keyword>
<keyword id="KW-0500">Molybdenum</keyword>
<keyword id="KW-0560">Oxidoreductase</keyword>
<keyword id="KW-1185">Reference proteome</keyword>
<keyword id="KW-0712">Selenocysteine</keyword>
<keyword id="KW-0862">Zinc</keyword>
<organism>
    <name type="scientific">Methanococcus maripaludis (strain DSM 14266 / JCM 13030 / NBRC 101832 / S2 / LL)</name>
    <dbReference type="NCBI Taxonomy" id="267377"/>
    <lineage>
        <taxon>Archaea</taxon>
        <taxon>Methanobacteriati</taxon>
        <taxon>Methanobacteriota</taxon>
        <taxon>Methanomada group</taxon>
        <taxon>Methanococci</taxon>
        <taxon>Methanococcales</taxon>
        <taxon>Methanococcaceae</taxon>
        <taxon>Methanococcus</taxon>
    </lineage>
</organism>
<dbReference type="EC" id="1.17.98.3" evidence="8"/>
<dbReference type="EMBL" id="BX950229">
    <property type="protein sequence ID" value="CAF30854.1"/>
    <property type="molecule type" value="Genomic_DNA"/>
</dbReference>
<dbReference type="RefSeq" id="WP_011171242.1">
    <property type="nucleotide sequence ID" value="NC_005791.1"/>
</dbReference>
<dbReference type="STRING" id="267377.MMP1298"/>
<dbReference type="GeneID" id="2761025"/>
<dbReference type="KEGG" id="mmp:MMP1298"/>
<dbReference type="PATRIC" id="fig|267377.15.peg.1332"/>
<dbReference type="eggNOG" id="arCOG01491">
    <property type="taxonomic scope" value="Archaea"/>
</dbReference>
<dbReference type="HOGENOM" id="CLU_000422_4_0_2"/>
<dbReference type="OrthoDB" id="23466at2157"/>
<dbReference type="BioCyc" id="MetaCyc:MONOMER-20163"/>
<dbReference type="Proteomes" id="UP000000590">
    <property type="component" value="Chromosome"/>
</dbReference>
<dbReference type="GO" id="GO:0016020">
    <property type="term" value="C:membrane"/>
    <property type="evidence" value="ECO:0007669"/>
    <property type="project" value="TreeGrafter"/>
</dbReference>
<dbReference type="GO" id="GO:0051539">
    <property type="term" value="F:4 iron, 4 sulfur cluster binding"/>
    <property type="evidence" value="ECO:0007669"/>
    <property type="project" value="UniProtKB-KW"/>
</dbReference>
<dbReference type="GO" id="GO:0043794">
    <property type="term" value="F:formate dehydrogenase (coenzyme F420) activity"/>
    <property type="evidence" value="ECO:0007669"/>
    <property type="project" value="RHEA"/>
</dbReference>
<dbReference type="GO" id="GO:0008863">
    <property type="term" value="F:formate dehydrogenase (NAD+) activity"/>
    <property type="evidence" value="ECO:0007669"/>
    <property type="project" value="InterPro"/>
</dbReference>
<dbReference type="GO" id="GO:0046872">
    <property type="term" value="F:metal ion binding"/>
    <property type="evidence" value="ECO:0007669"/>
    <property type="project" value="UniProtKB-KW"/>
</dbReference>
<dbReference type="GO" id="GO:0043546">
    <property type="term" value="F:molybdopterin cofactor binding"/>
    <property type="evidence" value="ECO:0007669"/>
    <property type="project" value="InterPro"/>
</dbReference>
<dbReference type="GO" id="GO:0003954">
    <property type="term" value="F:NADH dehydrogenase activity"/>
    <property type="evidence" value="ECO:0007669"/>
    <property type="project" value="TreeGrafter"/>
</dbReference>
<dbReference type="GO" id="GO:0015942">
    <property type="term" value="P:formate metabolic process"/>
    <property type="evidence" value="ECO:0007669"/>
    <property type="project" value="InterPro"/>
</dbReference>
<dbReference type="GO" id="GO:0022904">
    <property type="term" value="P:respiratory electron transport chain"/>
    <property type="evidence" value="ECO:0007669"/>
    <property type="project" value="TreeGrafter"/>
</dbReference>
<dbReference type="CDD" id="cd02790">
    <property type="entry name" value="MopB_CT_Formate-Dh_H"/>
    <property type="match status" value="1"/>
</dbReference>
<dbReference type="CDD" id="cd02753">
    <property type="entry name" value="MopB_Formate-Dh-H"/>
    <property type="match status" value="1"/>
</dbReference>
<dbReference type="FunFam" id="2.20.25.90:FF:000006">
    <property type="entry name" value="Formate dehydrogenase alpha subunit"/>
    <property type="match status" value="1"/>
</dbReference>
<dbReference type="FunFam" id="3.40.228.10:FF:000002">
    <property type="entry name" value="Formate dehydrogenase subunit alpha"/>
    <property type="match status" value="1"/>
</dbReference>
<dbReference type="FunFam" id="2.40.40.20:FF:000005">
    <property type="entry name" value="Periplasmic nitrate reductase"/>
    <property type="match status" value="1"/>
</dbReference>
<dbReference type="Gene3D" id="2.40.40.20">
    <property type="match status" value="1"/>
</dbReference>
<dbReference type="Gene3D" id="3.40.50.740">
    <property type="match status" value="1"/>
</dbReference>
<dbReference type="Gene3D" id="2.20.25.90">
    <property type="entry name" value="ADC-like domains"/>
    <property type="match status" value="1"/>
</dbReference>
<dbReference type="Gene3D" id="3.40.228.10">
    <property type="entry name" value="Dimethylsulfoxide Reductase, domain 2"/>
    <property type="match status" value="1"/>
</dbReference>
<dbReference type="InterPro" id="IPR009010">
    <property type="entry name" value="Asp_de-COase-like_dom_sf"/>
</dbReference>
<dbReference type="InterPro" id="IPR041925">
    <property type="entry name" value="CT_Formate-Dh_H"/>
</dbReference>
<dbReference type="InterPro" id="IPR041924">
    <property type="entry name" value="Formate_Dh-H_N"/>
</dbReference>
<dbReference type="InterPro" id="IPR006478">
    <property type="entry name" value="Formate_DH_asu"/>
</dbReference>
<dbReference type="InterPro" id="IPR006657">
    <property type="entry name" value="MoPterin_dinucl-bd_dom"/>
</dbReference>
<dbReference type="InterPro" id="IPR006656">
    <property type="entry name" value="Mopterin_OxRdtase"/>
</dbReference>
<dbReference type="InterPro" id="IPR006963">
    <property type="entry name" value="Mopterin_OxRdtase_4Fe-4S_dom"/>
</dbReference>
<dbReference type="InterPro" id="IPR006655">
    <property type="entry name" value="Mopterin_OxRdtase_prok_CS"/>
</dbReference>
<dbReference type="InterPro" id="IPR027467">
    <property type="entry name" value="MopterinOxRdtase_cofactor_BS"/>
</dbReference>
<dbReference type="InterPro" id="IPR050123">
    <property type="entry name" value="Prok_molybdopt-oxidoreductase"/>
</dbReference>
<dbReference type="NCBIfam" id="TIGR01591">
    <property type="entry name" value="Fdh-alpha"/>
    <property type="match status" value="1"/>
</dbReference>
<dbReference type="PANTHER" id="PTHR43105:SF14">
    <property type="entry name" value="FORMATE DEHYDROGENASE H"/>
    <property type="match status" value="1"/>
</dbReference>
<dbReference type="PANTHER" id="PTHR43105">
    <property type="entry name" value="RESPIRATORY NITRATE REDUCTASE"/>
    <property type="match status" value="1"/>
</dbReference>
<dbReference type="Pfam" id="PF04879">
    <property type="entry name" value="Molybdop_Fe4S4"/>
    <property type="match status" value="1"/>
</dbReference>
<dbReference type="Pfam" id="PF00384">
    <property type="entry name" value="Molybdopterin"/>
    <property type="match status" value="1"/>
</dbReference>
<dbReference type="Pfam" id="PF01568">
    <property type="entry name" value="Molydop_binding"/>
    <property type="match status" value="1"/>
</dbReference>
<dbReference type="SMART" id="SM00926">
    <property type="entry name" value="Molybdop_Fe4S4"/>
    <property type="match status" value="1"/>
</dbReference>
<dbReference type="SUPFAM" id="SSF50692">
    <property type="entry name" value="ADC-like"/>
    <property type="match status" value="1"/>
</dbReference>
<dbReference type="SUPFAM" id="SSF53706">
    <property type="entry name" value="Formate dehydrogenase/DMSO reductase, domains 1-3"/>
    <property type="match status" value="1"/>
</dbReference>
<dbReference type="PROSITE" id="PS51669">
    <property type="entry name" value="4FE4S_MOW_BIS_MGD"/>
    <property type="match status" value="1"/>
</dbReference>
<dbReference type="PROSITE" id="PS00551">
    <property type="entry name" value="MOLYBDOPTERIN_PROK_1"/>
    <property type="match status" value="1"/>
</dbReference>
<dbReference type="PROSITE" id="PS00490">
    <property type="entry name" value="MOLYBDOPTERIN_PROK_2"/>
    <property type="match status" value="1"/>
</dbReference>
<protein>
    <recommendedName>
        <fullName evidence="7">F420-dependent formate dehydrogenase 1 subunit alpha</fullName>
        <shortName evidence="7">Fdh1 subunit alpha</shortName>
        <ecNumber evidence="8">1.17.98.3</ecNumber>
    </recommendedName>
</protein>